<protein>
    <recommendedName>
        <fullName>Sensor protein GtcS</fullName>
        <ecNumber>2.7.13.3</ecNumber>
    </recommendedName>
</protein>
<reference key="1">
    <citation type="journal article" date="1995" name="DNA Seq.">
        <title>The gtcRS operon coding for two-component system regulatory proteins is located adjacent to the grs operon of Bacillus brevis.</title>
        <authorList>
            <person name="Turgay K."/>
            <person name="Marahiel M.A."/>
        </authorList>
    </citation>
    <scope>NUCLEOTIDE SEQUENCE [GENOMIC DNA]</scope>
    <source>
        <strain>ATCC 9999 / DSM 2895 / JCM 8504 / NBRC 15520 / NCIMB 7096 / NCTC 7096</strain>
    </source>
</reference>
<dbReference type="EC" id="2.7.13.3"/>
<dbReference type="EMBL" id="X78502">
    <property type="protein sequence ID" value="CAA55265.1"/>
    <property type="molecule type" value="Genomic_DNA"/>
</dbReference>
<dbReference type="PIR" id="I40085">
    <property type="entry name" value="I40085"/>
</dbReference>
<dbReference type="SMR" id="Q44930"/>
<dbReference type="STRING" id="47500.AF333_17640"/>
<dbReference type="GO" id="GO:0005886">
    <property type="term" value="C:plasma membrane"/>
    <property type="evidence" value="ECO:0007669"/>
    <property type="project" value="UniProtKB-SubCell"/>
</dbReference>
<dbReference type="GO" id="GO:0005524">
    <property type="term" value="F:ATP binding"/>
    <property type="evidence" value="ECO:0007669"/>
    <property type="project" value="UniProtKB-KW"/>
</dbReference>
<dbReference type="GO" id="GO:0004721">
    <property type="term" value="F:phosphoprotein phosphatase activity"/>
    <property type="evidence" value="ECO:0007669"/>
    <property type="project" value="TreeGrafter"/>
</dbReference>
<dbReference type="GO" id="GO:0000155">
    <property type="term" value="F:phosphorelay sensor kinase activity"/>
    <property type="evidence" value="ECO:0007669"/>
    <property type="project" value="InterPro"/>
</dbReference>
<dbReference type="GO" id="GO:0016036">
    <property type="term" value="P:cellular response to phosphate starvation"/>
    <property type="evidence" value="ECO:0007669"/>
    <property type="project" value="TreeGrafter"/>
</dbReference>
<dbReference type="CDD" id="cd06225">
    <property type="entry name" value="HAMP"/>
    <property type="match status" value="1"/>
</dbReference>
<dbReference type="CDD" id="cd00075">
    <property type="entry name" value="HATPase"/>
    <property type="match status" value="1"/>
</dbReference>
<dbReference type="CDD" id="cd00082">
    <property type="entry name" value="HisKA"/>
    <property type="match status" value="1"/>
</dbReference>
<dbReference type="Gene3D" id="1.10.287.130">
    <property type="match status" value="1"/>
</dbReference>
<dbReference type="Gene3D" id="6.10.340.10">
    <property type="match status" value="1"/>
</dbReference>
<dbReference type="Gene3D" id="3.30.565.10">
    <property type="entry name" value="Histidine kinase-like ATPase, C-terminal domain"/>
    <property type="match status" value="1"/>
</dbReference>
<dbReference type="InterPro" id="IPR050351">
    <property type="entry name" value="2-comp_sensor_kinase"/>
</dbReference>
<dbReference type="InterPro" id="IPR003660">
    <property type="entry name" value="HAMP_dom"/>
</dbReference>
<dbReference type="InterPro" id="IPR036890">
    <property type="entry name" value="HATPase_C_sf"/>
</dbReference>
<dbReference type="InterPro" id="IPR005467">
    <property type="entry name" value="His_kinase_dom"/>
</dbReference>
<dbReference type="InterPro" id="IPR003661">
    <property type="entry name" value="HisK_dim/P_dom"/>
</dbReference>
<dbReference type="InterPro" id="IPR036097">
    <property type="entry name" value="HisK_dim/P_sf"/>
</dbReference>
<dbReference type="InterPro" id="IPR004358">
    <property type="entry name" value="Sig_transdc_His_kin-like_C"/>
</dbReference>
<dbReference type="PANTHER" id="PTHR45453">
    <property type="entry name" value="PHOSPHATE REGULON SENSOR PROTEIN PHOR"/>
    <property type="match status" value="1"/>
</dbReference>
<dbReference type="PANTHER" id="PTHR45453:SF1">
    <property type="entry name" value="PHOSPHATE REGULON SENSOR PROTEIN PHOR"/>
    <property type="match status" value="1"/>
</dbReference>
<dbReference type="Pfam" id="PF00672">
    <property type="entry name" value="HAMP"/>
    <property type="match status" value="1"/>
</dbReference>
<dbReference type="Pfam" id="PF02518">
    <property type="entry name" value="HATPase_c"/>
    <property type="match status" value="1"/>
</dbReference>
<dbReference type="Pfam" id="PF00512">
    <property type="entry name" value="HisKA"/>
    <property type="match status" value="1"/>
</dbReference>
<dbReference type="PRINTS" id="PR00344">
    <property type="entry name" value="BCTRLSENSOR"/>
</dbReference>
<dbReference type="SMART" id="SM00304">
    <property type="entry name" value="HAMP"/>
    <property type="match status" value="1"/>
</dbReference>
<dbReference type="SMART" id="SM00387">
    <property type="entry name" value="HATPase_c"/>
    <property type="match status" value="1"/>
</dbReference>
<dbReference type="SMART" id="SM00388">
    <property type="entry name" value="HisKA"/>
    <property type="match status" value="1"/>
</dbReference>
<dbReference type="SUPFAM" id="SSF55874">
    <property type="entry name" value="ATPase domain of HSP90 chaperone/DNA topoisomerase II/histidine kinase"/>
    <property type="match status" value="1"/>
</dbReference>
<dbReference type="SUPFAM" id="SSF158472">
    <property type="entry name" value="HAMP domain-like"/>
    <property type="match status" value="1"/>
</dbReference>
<dbReference type="SUPFAM" id="SSF47384">
    <property type="entry name" value="Homodimeric domain of signal transducing histidine kinase"/>
    <property type="match status" value="1"/>
</dbReference>
<dbReference type="PROSITE" id="PS50885">
    <property type="entry name" value="HAMP"/>
    <property type="match status" value="1"/>
</dbReference>
<dbReference type="PROSITE" id="PS50109">
    <property type="entry name" value="HIS_KIN"/>
    <property type="match status" value="1"/>
</dbReference>
<proteinExistence type="predicted"/>
<sequence>MITAYILFTVTVGVTNSIVFYLDDHIGTRHFKKRVYCSSAWIVAWRLMEMVIFALSVYLYSRWTSKRITGPLEKITDAIQKMREGEFAQRLCFKADYELTLIQEHFNEMVAHLEKTEAEKNKLEQSKQRMLLDLSHDFKTPITTIQGYAMALQMGVVDSPEKQRRYLEMIYNKSIIVTALVEDMFQLATLDSPDLPSAEEHGRFGRTGSEIAIAYFDQFEQNKFSLDLKIPTQRVMIRMNRNLLYRALSNLLSNTLKHNPKGTKVALSLTDTHEAILLEVMDNGIGIAEELKESIFQPFVRGDKARTGEGTGLGLPSPKKRLNFMVESCCSRVNQGKQYSRSFSQRLENDLPYRLPYHRMNKFHRNANQQ</sequence>
<keyword id="KW-0067">ATP-binding</keyword>
<keyword id="KW-1003">Cell membrane</keyword>
<keyword id="KW-0418">Kinase</keyword>
<keyword id="KW-0472">Membrane</keyword>
<keyword id="KW-0547">Nucleotide-binding</keyword>
<keyword id="KW-0597">Phosphoprotein</keyword>
<keyword id="KW-0808">Transferase</keyword>
<keyword id="KW-0812">Transmembrane</keyword>
<keyword id="KW-1133">Transmembrane helix</keyword>
<keyword id="KW-0902">Two-component regulatory system</keyword>
<feature type="chain" id="PRO_0000074769" description="Sensor protein GtcS">
    <location>
        <begin position="1"/>
        <end position="370"/>
    </location>
</feature>
<feature type="transmembrane region" description="Helical" evidence="1">
    <location>
        <begin position="2"/>
        <end position="22"/>
    </location>
</feature>
<feature type="transmembrane region" description="Helical" evidence="1">
    <location>
        <begin position="40"/>
        <end position="60"/>
    </location>
</feature>
<feature type="domain" description="HAMP" evidence="2">
    <location>
        <begin position="66"/>
        <end position="118"/>
    </location>
</feature>
<feature type="domain" description="Histidine kinase" evidence="3">
    <location>
        <begin position="133"/>
        <end position="355"/>
    </location>
</feature>
<accession>Q44930</accession>
<organism>
    <name type="scientific">Aneurinibacillus migulanus</name>
    <name type="common">Bacillus migulanus</name>
    <dbReference type="NCBI Taxonomy" id="47500"/>
    <lineage>
        <taxon>Bacteria</taxon>
        <taxon>Bacillati</taxon>
        <taxon>Bacillota</taxon>
        <taxon>Bacilli</taxon>
        <taxon>Bacillales</taxon>
        <taxon>Paenibacillaceae</taxon>
        <taxon>Aneurinibacillus group</taxon>
        <taxon>Aneurinibacillus</taxon>
    </lineage>
</organism>
<gene>
    <name type="primary">gtcS</name>
</gene>
<evidence type="ECO:0000255" key="1"/>
<evidence type="ECO:0000255" key="2">
    <source>
        <dbReference type="PROSITE-ProRule" id="PRU00102"/>
    </source>
</evidence>
<evidence type="ECO:0000255" key="3">
    <source>
        <dbReference type="PROSITE-ProRule" id="PRU00107"/>
    </source>
</evidence>
<evidence type="ECO:0000305" key="4"/>
<name>GTCS_ANEMI</name>
<comment type="function">
    <text>Member of the two-component regulatory system GtcS/GtcR which may act in the control of the transcription of the grs operon which encodes the multienzymes involved in the biosynthesis of the peptide antibiotic gramicidin S. Probably activates GtcR by phosphorylation.</text>
</comment>
<comment type="catalytic activity">
    <reaction>
        <text>ATP + protein L-histidine = ADP + protein N-phospho-L-histidine.</text>
        <dbReference type="EC" id="2.7.13.3"/>
    </reaction>
</comment>
<comment type="subcellular location">
    <subcellularLocation>
        <location evidence="4">Cell membrane</location>
        <topology evidence="4">Multi-pass membrane protein</topology>
    </subcellularLocation>
</comment>